<evidence type="ECO:0000250" key="1">
    <source>
        <dbReference type="UniProtKB" id="Q8BWH0"/>
    </source>
</evidence>
<evidence type="ECO:0000250" key="2">
    <source>
        <dbReference type="UniProtKB" id="Q9NVC3"/>
    </source>
</evidence>
<evidence type="ECO:0000255" key="3"/>
<evidence type="ECO:0000305" key="4"/>
<comment type="function">
    <text evidence="2">Symporter that selectively cotransports sodium ions and amino acids, such as L-glutamine and L-asparagine from the lysosome into the cytoplasm and may participates in mTORC1 activation. The transport activity requires an acidic lysosomal lumen.</text>
</comment>
<comment type="catalytic activity">
    <reaction evidence="2">
        <text>L-asparagine(in) + Na(+)(in) = L-asparagine(out) + Na(+)(out)</text>
        <dbReference type="Rhea" id="RHEA:71383"/>
        <dbReference type="ChEBI" id="CHEBI:29101"/>
        <dbReference type="ChEBI" id="CHEBI:58048"/>
    </reaction>
</comment>
<comment type="catalytic activity">
    <reaction evidence="2">
        <text>L-glutamine(in) + Na(+)(in) = L-glutamine(out) + Na(+)(out)</text>
        <dbReference type="Rhea" id="RHEA:68236"/>
        <dbReference type="ChEBI" id="CHEBI:29101"/>
        <dbReference type="ChEBI" id="CHEBI:58359"/>
    </reaction>
</comment>
<comment type="subcellular location">
    <subcellularLocation>
        <location evidence="2">Lysosome membrane</location>
        <topology evidence="3">Multi-pass membrane protein</topology>
    </subcellularLocation>
    <subcellularLocation>
        <location evidence="1">Cell projection</location>
        <location evidence="1">Axon</location>
    </subcellularLocation>
    <text evidence="1">In neurons, located in soma.</text>
</comment>
<comment type="similarity">
    <text evidence="4">Belongs to the amino acid/polyamine transporter 2 family.</text>
</comment>
<name>S38A7_DANRE</name>
<reference key="1">
    <citation type="submission" date="2004-07" db="EMBL/GenBank/DDBJ databases">
        <authorList>
            <consortium name="NIH - Zebrafish Gene Collection (ZGC) project"/>
        </authorList>
    </citation>
    <scope>NUCLEOTIDE SEQUENCE [LARGE SCALE MRNA]</scope>
    <source>
        <strain>AB</strain>
        <tissue>Embryo</tissue>
    </source>
</reference>
<sequence>MSRPDRAINSEAGDWGYSEDAGERAWLLQSPSVDSVQPPSQSDDSRGGTSSLGAVFIVVNAALGAGLLNFPAAFNMAGGITAGVTLQMCMMAFIITGLVILAYCSQVSNESTYQEVVRAVCGKALGVICELAIAVYTFGTCIAFLIIIGDQLDKLIGAINNESEKEISLHWYTDRKFTITLTSVLIILPLSIPKEIGFQKYASTLSVIGTWYVTIIVIVKYIWPSKDVSPGIIPVRPASWTDVFNAMPTICFGFQCHVSSVPVFNSMKKPEIRPWWGVVTISMIICLFVYTGTGVCGFLSFGSSVSQDVLMSYPSDDVAVAIARAFIIICVVTSYPILHFCGRAVLEGLWLRFKGEEVETDVAKERRRRILQTLVWFCLTLILALFIPDIGRVISLIGGLAACFIFVFPGLCLIQAKLSEHDVRSNSWNAMVAYGVIMVTIGAFIFGQTTTNAIYKDIINNPNSP</sequence>
<gene>
    <name evidence="2" type="primary">slc38a7</name>
    <name type="ORF">zgc:100802</name>
</gene>
<feature type="chain" id="PRO_0000319601" description="Sodium-coupled neutral amino acid transporter 7">
    <location>
        <begin position="1"/>
        <end position="465"/>
    </location>
</feature>
<feature type="transmembrane region" description="Helical" evidence="3">
    <location>
        <begin position="54"/>
        <end position="74"/>
    </location>
</feature>
<feature type="transmembrane region" description="Helical" evidence="3">
    <location>
        <begin position="82"/>
        <end position="102"/>
    </location>
</feature>
<feature type="transmembrane region" description="Helical" evidence="3">
    <location>
        <begin position="128"/>
        <end position="148"/>
    </location>
</feature>
<feature type="transmembrane region" description="Helical" evidence="3">
    <location>
        <begin position="177"/>
        <end position="197"/>
    </location>
</feature>
<feature type="transmembrane region" description="Helical" evidence="3">
    <location>
        <begin position="204"/>
        <end position="224"/>
    </location>
</feature>
<feature type="transmembrane region" description="Helical" evidence="3">
    <location>
        <begin position="244"/>
        <end position="264"/>
    </location>
</feature>
<feature type="transmembrane region" description="Helical" evidence="3">
    <location>
        <begin position="275"/>
        <end position="295"/>
    </location>
</feature>
<feature type="transmembrane region" description="Helical" evidence="3">
    <location>
        <begin position="318"/>
        <end position="338"/>
    </location>
</feature>
<feature type="transmembrane region" description="Helical" evidence="3">
    <location>
        <begin position="370"/>
        <end position="390"/>
    </location>
</feature>
<feature type="transmembrane region" description="Helical" evidence="3">
    <location>
        <begin position="394"/>
        <end position="414"/>
    </location>
</feature>
<feature type="transmembrane region" description="Helical" evidence="3">
    <location>
        <begin position="427"/>
        <end position="447"/>
    </location>
</feature>
<feature type="sequence conflict" description="In Ref. 1; AAI00118." evidence="4" ref="1">
    <original>S</original>
    <variation>T</variation>
    <location>
        <position position="111"/>
    </location>
</feature>
<dbReference type="EMBL" id="BC100117">
    <property type="protein sequence ID" value="AAI00118.1"/>
    <property type="molecule type" value="mRNA"/>
</dbReference>
<dbReference type="EMBL" id="BC077100">
    <property type="protein sequence ID" value="AAH77100.1"/>
    <property type="molecule type" value="mRNA"/>
</dbReference>
<dbReference type="RefSeq" id="NP_001003648.1">
    <property type="nucleotide sequence ID" value="NM_001003648.1"/>
</dbReference>
<dbReference type="SMR" id="Q6DEL1"/>
<dbReference type="FunCoup" id="Q6DEL1">
    <property type="interactions" value="43"/>
</dbReference>
<dbReference type="STRING" id="7955.ENSDARP00000068329"/>
<dbReference type="PaxDb" id="7955-ENSDARP00000068329"/>
<dbReference type="GeneID" id="445254"/>
<dbReference type="KEGG" id="dre:445254"/>
<dbReference type="AGR" id="ZFIN:ZDB-GENE-040801-266"/>
<dbReference type="CTD" id="55238"/>
<dbReference type="ZFIN" id="ZDB-GENE-040801-266">
    <property type="gene designation" value="slc38a7"/>
</dbReference>
<dbReference type="eggNOG" id="KOG1305">
    <property type="taxonomic scope" value="Eukaryota"/>
</dbReference>
<dbReference type="InParanoid" id="Q6DEL1"/>
<dbReference type="OrthoDB" id="438545at2759"/>
<dbReference type="PhylomeDB" id="Q6DEL1"/>
<dbReference type="PRO" id="PR:Q6DEL1"/>
<dbReference type="Proteomes" id="UP000000437">
    <property type="component" value="Chromosome 7"/>
</dbReference>
<dbReference type="GO" id="GO:0030424">
    <property type="term" value="C:axon"/>
    <property type="evidence" value="ECO:0007669"/>
    <property type="project" value="UniProtKB-SubCell"/>
</dbReference>
<dbReference type="GO" id="GO:0005765">
    <property type="term" value="C:lysosomal membrane"/>
    <property type="evidence" value="ECO:0000250"/>
    <property type="project" value="UniProtKB"/>
</dbReference>
<dbReference type="GO" id="GO:0016020">
    <property type="term" value="C:membrane"/>
    <property type="evidence" value="ECO:0000318"/>
    <property type="project" value="GO_Central"/>
</dbReference>
<dbReference type="GO" id="GO:0015182">
    <property type="term" value="F:L-asparagine transmembrane transporter activity"/>
    <property type="evidence" value="ECO:0000318"/>
    <property type="project" value="GO_Central"/>
</dbReference>
<dbReference type="GO" id="GO:0140901">
    <property type="term" value="F:L-asparagine:sodium symporter activity"/>
    <property type="evidence" value="ECO:0000250"/>
    <property type="project" value="UniProtKB"/>
</dbReference>
<dbReference type="GO" id="GO:0015186">
    <property type="term" value="F:L-glutamine transmembrane transporter activity"/>
    <property type="evidence" value="ECO:0000318"/>
    <property type="project" value="GO_Central"/>
</dbReference>
<dbReference type="GO" id="GO:0140902">
    <property type="term" value="F:L-glutamine:sodium symporter activity"/>
    <property type="evidence" value="ECO:0000250"/>
    <property type="project" value="UniProtKB"/>
</dbReference>
<dbReference type="GO" id="GO:0003333">
    <property type="term" value="P:amino acid transmembrane transport"/>
    <property type="evidence" value="ECO:0000318"/>
    <property type="project" value="GO_Central"/>
</dbReference>
<dbReference type="GO" id="GO:0006867">
    <property type="term" value="P:asparagine transport"/>
    <property type="evidence" value="ECO:0000250"/>
    <property type="project" value="UniProtKB"/>
</dbReference>
<dbReference type="GO" id="GO:0006868">
    <property type="term" value="P:glutamine transport"/>
    <property type="evidence" value="ECO:0000250"/>
    <property type="project" value="UniProtKB"/>
</dbReference>
<dbReference type="FunFam" id="1.20.1740.10:FF:000038">
    <property type="entry name" value="Putative sodium-coupled neutral amino acid transporter 7"/>
    <property type="match status" value="1"/>
</dbReference>
<dbReference type="Gene3D" id="1.20.1740.10">
    <property type="entry name" value="Amino acid/polyamine transporter I"/>
    <property type="match status" value="1"/>
</dbReference>
<dbReference type="InterPro" id="IPR013057">
    <property type="entry name" value="AA_transpt_TM"/>
</dbReference>
<dbReference type="PANTHER" id="PTHR22950">
    <property type="entry name" value="AMINO ACID TRANSPORTER"/>
    <property type="match status" value="1"/>
</dbReference>
<dbReference type="PANTHER" id="PTHR22950:SF192">
    <property type="entry name" value="SODIUM-COUPLED NEUTRAL AMINO ACID TRANSPORTER 7"/>
    <property type="match status" value="1"/>
</dbReference>
<dbReference type="Pfam" id="PF01490">
    <property type="entry name" value="Aa_trans"/>
    <property type="match status" value="1"/>
</dbReference>
<protein>
    <recommendedName>
        <fullName evidence="2">Sodium-coupled neutral amino acid transporter 7</fullName>
    </recommendedName>
    <alternativeName>
        <fullName>Solute carrier family 38 member 7</fullName>
    </alternativeName>
</protein>
<proteinExistence type="evidence at transcript level"/>
<organism>
    <name type="scientific">Danio rerio</name>
    <name type="common">Zebrafish</name>
    <name type="synonym">Brachydanio rerio</name>
    <dbReference type="NCBI Taxonomy" id="7955"/>
    <lineage>
        <taxon>Eukaryota</taxon>
        <taxon>Metazoa</taxon>
        <taxon>Chordata</taxon>
        <taxon>Craniata</taxon>
        <taxon>Vertebrata</taxon>
        <taxon>Euteleostomi</taxon>
        <taxon>Actinopterygii</taxon>
        <taxon>Neopterygii</taxon>
        <taxon>Teleostei</taxon>
        <taxon>Ostariophysi</taxon>
        <taxon>Cypriniformes</taxon>
        <taxon>Danionidae</taxon>
        <taxon>Danioninae</taxon>
        <taxon>Danio</taxon>
    </lineage>
</organism>
<accession>Q6DEL1</accession>
<accession>Q498Q4</accession>
<keyword id="KW-0029">Amino-acid transport</keyword>
<keyword id="KW-0966">Cell projection</keyword>
<keyword id="KW-0406">Ion transport</keyword>
<keyword id="KW-0458">Lysosome</keyword>
<keyword id="KW-0472">Membrane</keyword>
<keyword id="KW-1185">Reference proteome</keyword>
<keyword id="KW-0915">Sodium</keyword>
<keyword id="KW-0739">Sodium transport</keyword>
<keyword id="KW-0812">Transmembrane</keyword>
<keyword id="KW-1133">Transmembrane helix</keyword>
<keyword id="KW-0813">Transport</keyword>